<comment type="function">
    <text>May be involved in sexual development.</text>
</comment>
<comment type="subcellular location">
    <subcellularLocation>
        <location evidence="2">Nucleus</location>
    </subcellularLocation>
</comment>
<comment type="similarity">
    <text evidence="4">Belongs to the DMRT family.</text>
</comment>
<organism>
    <name type="scientific">Oreochromis niloticus</name>
    <name type="common">Nile tilapia</name>
    <name type="synonym">Tilapia nilotica</name>
    <dbReference type="NCBI Taxonomy" id="8128"/>
    <lineage>
        <taxon>Eukaryota</taxon>
        <taxon>Metazoa</taxon>
        <taxon>Chordata</taxon>
        <taxon>Craniata</taxon>
        <taxon>Vertebrata</taxon>
        <taxon>Euteleostomi</taxon>
        <taxon>Actinopterygii</taxon>
        <taxon>Neopterygii</taxon>
        <taxon>Teleostei</taxon>
        <taxon>Neoteleostei</taxon>
        <taxon>Acanthomorphata</taxon>
        <taxon>Ovalentaria</taxon>
        <taxon>Cichlomorphae</taxon>
        <taxon>Cichliformes</taxon>
        <taxon>Cichlidae</taxon>
        <taxon>African cichlids</taxon>
        <taxon>Pseudocrenilabrinae</taxon>
        <taxon>Oreochromini</taxon>
        <taxon>Oreochromis</taxon>
    </lineage>
</organism>
<accession>Q6YHU8</accession>
<protein>
    <recommendedName>
        <fullName>Doublesex- and mab-3-related transcription factor A2</fullName>
    </recommendedName>
    <alternativeName>
        <fullName>Doublesex- and mab-3-related transcription factor 5</fullName>
    </alternativeName>
</protein>
<name>DMTA2_ORENI</name>
<gene>
    <name type="primary">dmrta2</name>
    <name type="synonym">dmrt5</name>
</gene>
<proteinExistence type="inferred from homology"/>
<dbReference type="EMBL" id="AY149605">
    <property type="protein sequence ID" value="AAN78445.1"/>
    <property type="molecule type" value="Genomic_DNA"/>
</dbReference>
<dbReference type="SMR" id="Q6YHU8"/>
<dbReference type="FunCoup" id="Q6YHU8">
    <property type="interactions" value="473"/>
</dbReference>
<dbReference type="STRING" id="8128.ENSONIP00000002957"/>
<dbReference type="eggNOG" id="KOG3815">
    <property type="taxonomic scope" value="Eukaryota"/>
</dbReference>
<dbReference type="InParanoid" id="Q6YHU8"/>
<dbReference type="Proteomes" id="UP000005207">
    <property type="component" value="Unplaced"/>
</dbReference>
<dbReference type="GO" id="GO:0005634">
    <property type="term" value="C:nucleus"/>
    <property type="evidence" value="ECO:0007669"/>
    <property type="project" value="UniProtKB-SubCell"/>
</dbReference>
<dbReference type="GO" id="GO:0000981">
    <property type="term" value="F:DNA-binding transcription factor activity, RNA polymerase II-specific"/>
    <property type="evidence" value="ECO:0007669"/>
    <property type="project" value="TreeGrafter"/>
</dbReference>
<dbReference type="GO" id="GO:0046872">
    <property type="term" value="F:metal ion binding"/>
    <property type="evidence" value="ECO:0007669"/>
    <property type="project" value="UniProtKB-KW"/>
</dbReference>
<dbReference type="GO" id="GO:0000978">
    <property type="term" value="F:RNA polymerase II cis-regulatory region sequence-specific DNA binding"/>
    <property type="evidence" value="ECO:0007669"/>
    <property type="project" value="TreeGrafter"/>
</dbReference>
<dbReference type="GO" id="GO:0007281">
    <property type="term" value="P:germ cell development"/>
    <property type="evidence" value="ECO:0007669"/>
    <property type="project" value="TreeGrafter"/>
</dbReference>
<dbReference type="GO" id="GO:0007548">
    <property type="term" value="P:sex differentiation"/>
    <property type="evidence" value="ECO:0007669"/>
    <property type="project" value="TreeGrafter"/>
</dbReference>
<dbReference type="FunFam" id="4.10.1040.10:FF:000001">
    <property type="entry name" value="doublesex- and mab-3-related transcription factor 1"/>
    <property type="match status" value="1"/>
</dbReference>
<dbReference type="Gene3D" id="4.10.1040.10">
    <property type="entry name" value="DM DNA-binding domain"/>
    <property type="match status" value="1"/>
</dbReference>
<dbReference type="Gene3D" id="1.10.8.10">
    <property type="entry name" value="DNA helicase RuvA subunit, C-terminal domain"/>
    <property type="match status" value="1"/>
</dbReference>
<dbReference type="InterPro" id="IPR001275">
    <property type="entry name" value="DM_DNA-bd"/>
</dbReference>
<dbReference type="InterPro" id="IPR036407">
    <property type="entry name" value="DM_DNA-bd_sf"/>
</dbReference>
<dbReference type="InterPro" id="IPR005173">
    <property type="entry name" value="DMA"/>
</dbReference>
<dbReference type="InterPro" id="IPR026607">
    <property type="entry name" value="DMRT"/>
</dbReference>
<dbReference type="InterPro" id="IPR046472">
    <property type="entry name" value="DMRT5_1_DMB_dom"/>
</dbReference>
<dbReference type="InterPro" id="IPR009060">
    <property type="entry name" value="UBA-like_sf"/>
</dbReference>
<dbReference type="PANTHER" id="PTHR12322">
    <property type="entry name" value="DOUBLESEX AND MAB-3 RELATED TRANSCRIPTION FACTOR DMRT"/>
    <property type="match status" value="1"/>
</dbReference>
<dbReference type="PANTHER" id="PTHR12322:SF76">
    <property type="entry name" value="DOUBLESEX- AND MAB-3-RELATED TRANSCRIPTION FACTOR A2"/>
    <property type="match status" value="1"/>
</dbReference>
<dbReference type="Pfam" id="PF00751">
    <property type="entry name" value="DM"/>
    <property type="match status" value="1"/>
</dbReference>
<dbReference type="Pfam" id="PF03474">
    <property type="entry name" value="DMA"/>
    <property type="match status" value="1"/>
</dbReference>
<dbReference type="Pfam" id="PF20624">
    <property type="entry name" value="DMRT5_DMB"/>
    <property type="match status" value="1"/>
</dbReference>
<dbReference type="SMART" id="SM00301">
    <property type="entry name" value="DM"/>
    <property type="match status" value="1"/>
</dbReference>
<dbReference type="SUPFAM" id="SSF82927">
    <property type="entry name" value="Cysteine-rich DNA binding domain, (DM domain)"/>
    <property type="match status" value="1"/>
</dbReference>
<dbReference type="SUPFAM" id="SSF46934">
    <property type="entry name" value="UBA-like"/>
    <property type="match status" value="1"/>
</dbReference>
<dbReference type="PROSITE" id="PS40000">
    <property type="entry name" value="DM_1"/>
    <property type="match status" value="1"/>
</dbReference>
<dbReference type="PROSITE" id="PS50809">
    <property type="entry name" value="DM_2"/>
    <property type="match status" value="1"/>
</dbReference>
<evidence type="ECO:0000255" key="1"/>
<evidence type="ECO:0000255" key="2">
    <source>
        <dbReference type="PROSITE-ProRule" id="PRU00070"/>
    </source>
</evidence>
<evidence type="ECO:0000256" key="3">
    <source>
        <dbReference type="SAM" id="MobiDB-lite"/>
    </source>
</evidence>
<evidence type="ECO:0000305" key="4"/>
<keyword id="KW-0238">DNA-binding</keyword>
<keyword id="KW-0479">Metal-binding</keyword>
<keyword id="KW-0539">Nucleus</keyword>
<keyword id="KW-1185">Reference proteome</keyword>
<keyword id="KW-0862">Zinc</keyword>
<sequence length="449" mass="47547">MDLRPELPTASSASQVHPGAAAAAAAASIPVSMAGNLLRGPPLLLRAADKYPRTPKCARCRNHGVVSALKGHKRYCRWKDCMCAKCTLIAERQRVMAAQVALRRQQAQEESEARELQLLYGTAEGPAIAAANGIIPPRPNYEVFGSVSSESNSADSSIQKYELFPKNQLSGSATPQPSAGKPASTEGDSAPGISSPDGRHGGSGSENGDSESFISSPVSKPLKDGEETPGSVSSIGSDSGSETDKDDQEPSPSSAASRHMNAIDILTRVFPSHKRSVLELVLQGCGKDVVQAIEQILNNSGAQGPNKAGPDETWTAERMLQNAQQLPAASATTTAPTRPMLPGAMTLSNRSAFSPLQPNAPHFGADPSTYPLGTHLGLNPLRLAYSAHSRGLAFMTPYSTTGLMPTLGFRPPMYYAFSDLIRDRTMLHKEQGYASGLYGPLVNNTPEKQ</sequence>
<feature type="chain" id="PRO_0000333777" description="Doublesex- and mab-3-related transcription factor A2">
    <location>
        <begin position="1"/>
        <end position="449"/>
    </location>
</feature>
<feature type="domain" description="DMA" evidence="1">
    <location>
        <begin position="260"/>
        <end position="295"/>
    </location>
</feature>
<feature type="DNA-binding region" description="DM" evidence="2">
    <location>
        <begin position="57"/>
        <end position="104"/>
    </location>
</feature>
<feature type="region of interest" description="Disordered" evidence="3">
    <location>
        <begin position="166"/>
        <end position="259"/>
    </location>
</feature>
<feature type="compositionally biased region" description="Polar residues" evidence="3">
    <location>
        <begin position="167"/>
        <end position="177"/>
    </location>
</feature>
<feature type="compositionally biased region" description="Low complexity" evidence="3">
    <location>
        <begin position="230"/>
        <end position="240"/>
    </location>
</feature>
<reference key="1">
    <citation type="submission" date="2002-09" db="EMBL/GenBank/DDBJ databases">
        <title>Novel DM domain genes of Tilapia.</title>
        <authorList>
            <person name="Guan G."/>
            <person name="Kobayashi T."/>
            <person name="Nagahama Y."/>
        </authorList>
    </citation>
    <scope>NUCLEOTIDE SEQUENCE [GENOMIC DNA]</scope>
    <source>
        <tissue>Testis</tissue>
    </source>
</reference>